<accession>P53321</accession>
<gene>
    <name type="ordered locus">YGR259C</name>
</gene>
<reference key="1">
    <citation type="journal article" date="1997" name="Yeast">
        <title>Analysis of an 11.6 kb region from the right arm of chromosome VII of Saccharomyces cerevisiae between the RAD2 and the MES1 genes reveals the presence of three new genes.</title>
        <authorList>
            <person name="Clemente M.L."/>
            <person name="Sartori G."/>
            <person name="Cardazzo B."/>
            <person name="Carignani G."/>
        </authorList>
    </citation>
    <scope>NUCLEOTIDE SEQUENCE [GENOMIC DNA]</scope>
    <source>
        <strain>ATCC 96604 / S288c / FY1679</strain>
    </source>
</reference>
<reference key="2">
    <citation type="journal article" date="1997" name="Nature">
        <title>The nucleotide sequence of Saccharomyces cerevisiae chromosome VII.</title>
        <authorList>
            <person name="Tettelin H."/>
            <person name="Agostoni-Carbone M.L."/>
            <person name="Albermann K."/>
            <person name="Albers M."/>
            <person name="Arroyo J."/>
            <person name="Backes U."/>
            <person name="Barreiros T."/>
            <person name="Bertani I."/>
            <person name="Bjourson A.J."/>
            <person name="Brueckner M."/>
            <person name="Bruschi C.V."/>
            <person name="Carignani G."/>
            <person name="Castagnoli L."/>
            <person name="Cerdan E."/>
            <person name="Clemente M.L."/>
            <person name="Coblenz A."/>
            <person name="Coglievina M."/>
            <person name="Coissac E."/>
            <person name="Defoor E."/>
            <person name="Del Bino S."/>
            <person name="Delius H."/>
            <person name="Delneri D."/>
            <person name="de Wergifosse P."/>
            <person name="Dujon B."/>
            <person name="Durand P."/>
            <person name="Entian K.-D."/>
            <person name="Eraso P."/>
            <person name="Escribano V."/>
            <person name="Fabiani L."/>
            <person name="Fartmann B."/>
            <person name="Feroli F."/>
            <person name="Feuermann M."/>
            <person name="Frontali L."/>
            <person name="Garcia-Gonzalez M."/>
            <person name="Garcia-Saez M.I."/>
            <person name="Goffeau A."/>
            <person name="Guerreiro P."/>
            <person name="Hani J."/>
            <person name="Hansen M."/>
            <person name="Hebling U."/>
            <person name="Hernandez K."/>
            <person name="Heumann K."/>
            <person name="Hilger F."/>
            <person name="Hofmann B."/>
            <person name="Indge K.J."/>
            <person name="James C.M."/>
            <person name="Klima R."/>
            <person name="Koetter P."/>
            <person name="Kramer B."/>
            <person name="Kramer W."/>
            <person name="Lauquin G."/>
            <person name="Leuther H."/>
            <person name="Louis E.J."/>
            <person name="Maillier E."/>
            <person name="Marconi A."/>
            <person name="Martegani E."/>
            <person name="Mazon M.J."/>
            <person name="Mazzoni C."/>
            <person name="McReynolds A.D.K."/>
            <person name="Melchioretto P."/>
            <person name="Mewes H.-W."/>
            <person name="Minenkova O."/>
            <person name="Mueller-Auer S."/>
            <person name="Nawrocki A."/>
            <person name="Netter P."/>
            <person name="Neu R."/>
            <person name="Nombela C."/>
            <person name="Oliver S.G."/>
            <person name="Panzeri L."/>
            <person name="Paoluzi S."/>
            <person name="Plevani P."/>
            <person name="Portetelle D."/>
            <person name="Portillo F."/>
            <person name="Potier S."/>
            <person name="Purnelle B."/>
            <person name="Rieger M."/>
            <person name="Riles L."/>
            <person name="Rinaldi T."/>
            <person name="Robben J."/>
            <person name="Rodrigues-Pousada C."/>
            <person name="Rodriguez-Belmonte E."/>
            <person name="Rodriguez-Torres A.M."/>
            <person name="Rose M."/>
            <person name="Ruzzi M."/>
            <person name="Saliola M."/>
            <person name="Sanchez-Perez M."/>
            <person name="Schaefer B."/>
            <person name="Schaefer M."/>
            <person name="Scharfe M."/>
            <person name="Schmidheini T."/>
            <person name="Schreer A."/>
            <person name="Skala J."/>
            <person name="Souciet J.-L."/>
            <person name="Steensma H.Y."/>
            <person name="Talla E."/>
            <person name="Thierry A."/>
            <person name="Vandenbol M."/>
            <person name="van der Aart Q.J.M."/>
            <person name="Van Dyck L."/>
            <person name="Vanoni M."/>
            <person name="Verhasselt P."/>
            <person name="Voet M."/>
            <person name="Volckaert G."/>
            <person name="Wambutt R."/>
            <person name="Watson M.D."/>
            <person name="Weber N."/>
            <person name="Wedler E."/>
            <person name="Wedler H."/>
            <person name="Wipfli P."/>
            <person name="Wolf K."/>
            <person name="Wright L.F."/>
            <person name="Zaccaria P."/>
            <person name="Zimmermann M."/>
            <person name="Zollner A."/>
            <person name="Kleine K."/>
        </authorList>
    </citation>
    <scope>NUCLEOTIDE SEQUENCE [LARGE SCALE GENOMIC DNA]</scope>
    <source>
        <strain>ATCC 204508 / S288c</strain>
    </source>
</reference>
<reference key="3">
    <citation type="journal article" date="2014" name="G3 (Bethesda)">
        <title>The reference genome sequence of Saccharomyces cerevisiae: Then and now.</title>
        <authorList>
            <person name="Engel S.R."/>
            <person name="Dietrich F.S."/>
            <person name="Fisk D.G."/>
            <person name="Binkley G."/>
            <person name="Balakrishnan R."/>
            <person name="Costanzo M.C."/>
            <person name="Dwight S.S."/>
            <person name="Hitz B.C."/>
            <person name="Karra K."/>
            <person name="Nash R.S."/>
            <person name="Weng S."/>
            <person name="Wong E.D."/>
            <person name="Lloyd P."/>
            <person name="Skrzypek M.S."/>
            <person name="Miyasato S.R."/>
            <person name="Simison M."/>
            <person name="Cherry J.M."/>
        </authorList>
    </citation>
    <scope>GENOME REANNOTATION</scope>
    <source>
        <strain>ATCC 204508 / S288c</strain>
    </source>
</reference>
<reference key="4">
    <citation type="journal article" date="2007" name="Genome Res.">
        <title>Approaching a complete repository of sequence-verified protein-encoding clones for Saccharomyces cerevisiae.</title>
        <authorList>
            <person name="Hu Y."/>
            <person name="Rolfs A."/>
            <person name="Bhullar B."/>
            <person name="Murthy T.V.S."/>
            <person name="Zhu C."/>
            <person name="Berger M.F."/>
            <person name="Camargo A.A."/>
            <person name="Kelley F."/>
            <person name="McCarron S."/>
            <person name="Jepson D."/>
            <person name="Richardson A."/>
            <person name="Raphael J."/>
            <person name="Moreira D."/>
            <person name="Taycher E."/>
            <person name="Zuo D."/>
            <person name="Mohr S."/>
            <person name="Kane M.F."/>
            <person name="Williamson J."/>
            <person name="Simpson A.J.G."/>
            <person name="Bulyk M.L."/>
            <person name="Harlow E."/>
            <person name="Marsischky G."/>
            <person name="Kolodner R.D."/>
            <person name="LaBaer J."/>
        </authorList>
    </citation>
    <scope>NUCLEOTIDE SEQUENCE [GENOMIC DNA]</scope>
    <source>
        <strain>ATCC 204508 / S288c</strain>
    </source>
</reference>
<name>YG5G_YEAST</name>
<feature type="chain" id="PRO_0000202861" description="Putative uncharacterized protein YGR259C">
    <location>
        <begin position="1"/>
        <end position="146"/>
    </location>
</feature>
<evidence type="ECO:0000305" key="1"/>
<evidence type="ECO:0000305" key="2">
    <source>
    </source>
</evidence>
<protein>
    <recommendedName>
        <fullName>Putative uncharacterized protein YGR259C</fullName>
    </recommendedName>
</protein>
<sequence>MGSKRTYVAKKTVTHVLYCVPTRWISLDRPATSALPIFDLSRLERKYSIPIRGIKYISILRKTRFSIGWEGEGMPSSSVVVAIISRSVASSDFLSWLRLCKLASWPSSSWNVTSVGFSSDPSLVGDMKSTSSTKCLGDSIVNLLLI</sequence>
<comment type="miscellaneous">
    <text evidence="1">Completely overlaps TNA1.</text>
</comment>
<comment type="caution">
    <text evidence="2">Product of a dubious gene prediction unlikely to encode a functional protein. Because of that it is not part of the S.cerevisiae S288c complete/reference proteome set.</text>
</comment>
<organism>
    <name type="scientific">Saccharomyces cerevisiae (strain ATCC 204508 / S288c)</name>
    <name type="common">Baker's yeast</name>
    <dbReference type="NCBI Taxonomy" id="559292"/>
    <lineage>
        <taxon>Eukaryota</taxon>
        <taxon>Fungi</taxon>
        <taxon>Dikarya</taxon>
        <taxon>Ascomycota</taxon>
        <taxon>Saccharomycotina</taxon>
        <taxon>Saccharomycetes</taxon>
        <taxon>Saccharomycetales</taxon>
        <taxon>Saccharomycetaceae</taxon>
        <taxon>Saccharomyces</taxon>
    </lineage>
</organism>
<proteinExistence type="uncertain"/>
<dbReference type="EMBL" id="Y07777">
    <property type="protein sequence ID" value="CAA69081.1"/>
    <property type="molecule type" value="Genomic_DNA"/>
</dbReference>
<dbReference type="EMBL" id="Z73044">
    <property type="protein sequence ID" value="CAA97288.1"/>
    <property type="molecule type" value="Genomic_DNA"/>
</dbReference>
<dbReference type="EMBL" id="AY693338">
    <property type="protein sequence ID" value="AAT93357.1"/>
    <property type="molecule type" value="Genomic_DNA"/>
</dbReference>
<dbReference type="PIR" id="S64592">
    <property type="entry name" value="S64592"/>
</dbReference>
<dbReference type="DIP" id="DIP-7441N"/>
<dbReference type="STRING" id="4932.YGR259C"/>
<dbReference type="iPTMnet" id="P53321"/>
<dbReference type="PaxDb" id="4932-YGR259C"/>
<dbReference type="EnsemblFungi" id="YGR259C_mRNA">
    <property type="protein sequence ID" value="YGR259C"/>
    <property type="gene ID" value="YGR259C"/>
</dbReference>
<dbReference type="AGR" id="SGD:S000003491"/>
<dbReference type="SGD" id="S000003491">
    <property type="gene designation" value="YGR259C"/>
</dbReference>
<dbReference type="HOGENOM" id="CLU_1778921_0_0_1"/>